<organism>
    <name type="scientific">Xenopus tropicalis</name>
    <name type="common">Western clawed frog</name>
    <name type="synonym">Silurana tropicalis</name>
    <dbReference type="NCBI Taxonomy" id="8364"/>
    <lineage>
        <taxon>Eukaryota</taxon>
        <taxon>Metazoa</taxon>
        <taxon>Chordata</taxon>
        <taxon>Craniata</taxon>
        <taxon>Vertebrata</taxon>
        <taxon>Euteleostomi</taxon>
        <taxon>Amphibia</taxon>
        <taxon>Batrachia</taxon>
        <taxon>Anura</taxon>
        <taxon>Pipoidea</taxon>
        <taxon>Pipidae</taxon>
        <taxon>Xenopodinae</taxon>
        <taxon>Xenopus</taxon>
        <taxon>Silurana</taxon>
    </lineage>
</organism>
<keyword id="KW-0548">Nucleotidyltransferase</keyword>
<keyword id="KW-1185">Reference proteome</keyword>
<keyword id="KW-0808">Transferase</keyword>
<accession>Q28CH3</accession>
<comment type="similarity">
    <text evidence="4">Belongs to the UDPGP type 1 family.</text>
</comment>
<name>UAP1L_XENTR</name>
<evidence type="ECO:0000250" key="1"/>
<evidence type="ECO:0000250" key="2">
    <source>
        <dbReference type="UniProtKB" id="Q9M9P3"/>
    </source>
</evidence>
<evidence type="ECO:0000256" key="3">
    <source>
        <dbReference type="SAM" id="MobiDB-lite"/>
    </source>
</evidence>
<evidence type="ECO:0000305" key="4"/>
<proteinExistence type="evidence at transcript level"/>
<sequence>MDRSESAESAESRRRRAEESGQGQLFRFWDELSPAEKEALLEQLEMLEPRELREHCQRAREAYVRESSAPQRLDDRMQPVPPEFLGSVRHSGTGELERWEREGFHQIAQNKVAVLLLAGGQGTRLGVTYPKGMYSVGLPSAKTLYQIQAERIRRLQQLASERHGETCTVPWYIMTSEFTLGPTRKFFEDHAYFGLERSDVVMFEQRMLPAVGFDGAAILEDKAKLAMAPDGNGGLYRALSDNRILEDMEGRGIQYVHVYCVDNILVKMADPVFIGFCVSKGADCGAKVVEKGYPAEPVGVVCRVDGVYQVVEYSEISPETAEKRNPNGALTFTAGNICNHFFTVPFLRAVIGSLEPRLNYHVAIKKVPYVDNEGNLVKPTSPNGIKMEKFVFDVFQFAKNFVAFEVLREEEFSPLKNADTADKDTPTTARRALLWQHYRWARRAGTHFLDETGSPIRDSHSISGEGDPPAVCEISPLVSYFGEGLESYMKDKDVSSFPFVLESSDAGPVPV</sequence>
<reference key="1">
    <citation type="submission" date="2006-10" db="EMBL/GenBank/DDBJ databases">
        <authorList>
            <consortium name="Sanger Xenopus tropicalis EST/cDNA project"/>
        </authorList>
    </citation>
    <scope>NUCLEOTIDE SEQUENCE [LARGE SCALE MRNA]</scope>
    <source>
        <tissue>Gastrula</tissue>
    </source>
</reference>
<gene>
    <name type="primary">uap1l1</name>
    <name type="ORF">TGas075i06.1</name>
</gene>
<dbReference type="EC" id="2.7.7.-"/>
<dbReference type="EMBL" id="CR926388">
    <property type="protein sequence ID" value="CAJ83512.1"/>
    <property type="molecule type" value="mRNA"/>
</dbReference>
<dbReference type="RefSeq" id="NP_001015926.1">
    <property type="nucleotide sequence ID" value="NM_001015926.2"/>
</dbReference>
<dbReference type="SMR" id="Q28CH3"/>
<dbReference type="FunCoup" id="Q28CH3">
    <property type="interactions" value="369"/>
</dbReference>
<dbReference type="STRING" id="8364.ENSXETP00000027619"/>
<dbReference type="GeneID" id="548680"/>
<dbReference type="KEGG" id="xtr:548680"/>
<dbReference type="AGR" id="Xenbase:XB-GENE-1002718"/>
<dbReference type="CTD" id="91373"/>
<dbReference type="Xenbase" id="XB-GENE-1002718">
    <property type="gene designation" value="uap1l1"/>
</dbReference>
<dbReference type="InParanoid" id="Q28CH3"/>
<dbReference type="OMA" id="THCTVPW"/>
<dbReference type="OrthoDB" id="532420at2759"/>
<dbReference type="Proteomes" id="UP000008143">
    <property type="component" value="Chromosome 8"/>
</dbReference>
<dbReference type="GO" id="GO:0070569">
    <property type="term" value="F:uridylyltransferase activity"/>
    <property type="evidence" value="ECO:0007669"/>
    <property type="project" value="InterPro"/>
</dbReference>
<dbReference type="CDD" id="cd04193">
    <property type="entry name" value="UDPGlcNAc_PPase"/>
    <property type="match status" value="1"/>
</dbReference>
<dbReference type="FunFam" id="3.90.550.10:FF:000043">
    <property type="entry name" value="UDP-N-acetylhexosamine pyrophosphorylase isoform X2"/>
    <property type="match status" value="1"/>
</dbReference>
<dbReference type="FunFam" id="2.10.10.100:FF:000004">
    <property type="entry name" value="UDP-N-acetylhexosamine pyrophosphorylase-like protein 1"/>
    <property type="match status" value="1"/>
</dbReference>
<dbReference type="Gene3D" id="2.10.10.100">
    <property type="match status" value="1"/>
</dbReference>
<dbReference type="Gene3D" id="3.90.550.10">
    <property type="entry name" value="Spore Coat Polysaccharide Biosynthesis Protein SpsA, Chain A"/>
    <property type="match status" value="1"/>
</dbReference>
<dbReference type="InterPro" id="IPR029044">
    <property type="entry name" value="Nucleotide-diphossugar_trans"/>
</dbReference>
<dbReference type="InterPro" id="IPR039741">
    <property type="entry name" value="UDP-sugar_pyrophosphorylase"/>
</dbReference>
<dbReference type="InterPro" id="IPR002618">
    <property type="entry name" value="UDPGP_fam"/>
</dbReference>
<dbReference type="PANTHER" id="PTHR11952">
    <property type="entry name" value="UDP- GLUCOSE PYROPHOSPHORYLASE"/>
    <property type="match status" value="1"/>
</dbReference>
<dbReference type="PANTHER" id="PTHR11952:SF6">
    <property type="entry name" value="UDP-N-ACETYLHEXOSAMINE PYROPHOSPHORYLASE-LIKE PROTEIN 1"/>
    <property type="match status" value="1"/>
</dbReference>
<dbReference type="Pfam" id="PF01704">
    <property type="entry name" value="UDPGP"/>
    <property type="match status" value="1"/>
</dbReference>
<dbReference type="SUPFAM" id="SSF53448">
    <property type="entry name" value="Nucleotide-diphospho-sugar transferases"/>
    <property type="match status" value="1"/>
</dbReference>
<protein>
    <recommendedName>
        <fullName>UDP-N-acetylhexosamine pyrophosphorylase-like protein 1</fullName>
        <ecNumber>2.7.7.-</ecNumber>
    </recommendedName>
</protein>
<feature type="chain" id="PRO_0000324583" description="UDP-N-acetylhexosamine pyrophosphorylase-like protein 1">
    <location>
        <begin position="1"/>
        <end position="511"/>
    </location>
</feature>
<feature type="region of interest" description="Disordered" evidence="3">
    <location>
        <begin position="1"/>
        <end position="22"/>
    </location>
</feature>
<feature type="short sequence motif" description="Substrate binding">
    <location>
        <begin position="117"/>
        <end position="120"/>
    </location>
</feature>
<feature type="short sequence motif" description="Substrate binding">
    <location>
        <begin position="312"/>
        <end position="313"/>
    </location>
</feature>
<feature type="compositionally biased region" description="Basic and acidic residues" evidence="3">
    <location>
        <begin position="1"/>
        <end position="19"/>
    </location>
</feature>
<feature type="binding site" evidence="2">
    <location>
        <begin position="117"/>
        <end position="120"/>
    </location>
    <ligand>
        <name>UTP</name>
        <dbReference type="ChEBI" id="CHEBI:46398"/>
    </ligand>
</feature>
<feature type="binding site" evidence="2">
    <location>
        <position position="131"/>
    </location>
    <ligand>
        <name>UTP</name>
        <dbReference type="ChEBI" id="CHEBI:46398"/>
    </ligand>
</feature>
<feature type="binding site" evidence="2">
    <location>
        <position position="205"/>
    </location>
    <ligand>
        <name>UTP</name>
        <dbReference type="ChEBI" id="CHEBI:46398"/>
    </ligand>
</feature>
<feature type="binding site" evidence="2">
    <location>
        <position position="231"/>
    </location>
    <ligand>
        <name>UTP</name>
        <dbReference type="ChEBI" id="CHEBI:46398"/>
    </ligand>
</feature>
<feature type="binding site" evidence="1">
    <location>
        <position position="232"/>
    </location>
    <ligand>
        <name>substrate</name>
    </ligand>
</feature>
<feature type="binding site" evidence="2">
    <location>
        <position position="262"/>
    </location>
    <ligand>
        <name>UTP</name>
        <dbReference type="ChEBI" id="CHEBI:46398"/>
    </ligand>
</feature>
<feature type="binding site" evidence="2">
    <location>
        <position position="386"/>
    </location>
    <ligand>
        <name>UTP</name>
        <dbReference type="ChEBI" id="CHEBI:46398"/>
    </ligand>
</feature>
<feature type="binding site" evidence="1">
    <location>
        <position position="416"/>
    </location>
    <ligand>
        <name>substrate</name>
    </ligand>
</feature>